<evidence type="ECO:0000255" key="1">
    <source>
        <dbReference type="HAMAP-Rule" id="MF_01897"/>
    </source>
</evidence>
<evidence type="ECO:0000255" key="2">
    <source>
        <dbReference type="PROSITE-ProRule" id="PRU01384"/>
    </source>
</evidence>
<evidence type="ECO:0000256" key="3">
    <source>
        <dbReference type="SAM" id="MobiDB-lite"/>
    </source>
</evidence>
<comment type="function">
    <text evidence="1">A type II topoisomerase that negatively supercoils closed circular double-stranded (ds) DNA in an ATP-dependent manner to modulate DNA topology and maintain chromosomes in an underwound state. Negative supercoiling favors strand separation, and DNA replication, transcription, recombination and repair, all of which involve strand separation. Also able to catalyze the interconversion of other topological isomers of dsDNA rings, including catenanes and knotted rings. Type II topoisomerases break and join 2 DNA strands simultaneously in an ATP-dependent manner.</text>
</comment>
<comment type="catalytic activity">
    <reaction evidence="1">
        <text>ATP-dependent breakage, passage and rejoining of double-stranded DNA.</text>
        <dbReference type="EC" id="5.6.2.2"/>
    </reaction>
</comment>
<comment type="subunit">
    <text evidence="1">Heterotetramer, composed of two GyrA and two GyrB chains. In the heterotetramer, GyrA contains the active site tyrosine that forms a transient covalent intermediate with DNA, while GyrB binds cofactors and catalyzes ATP hydrolysis.</text>
</comment>
<comment type="subcellular location">
    <subcellularLocation>
        <location evidence="1">Cytoplasm</location>
    </subcellularLocation>
</comment>
<comment type="miscellaneous">
    <text evidence="1">Few gyrases are as efficient as E.coli at forming negative supercoils. Not all organisms have 2 type II topoisomerases; in organisms with a single type II topoisomerase this enzyme also has to decatenate newly replicated chromosomes.</text>
</comment>
<comment type="similarity">
    <text evidence="1">Belongs to the type II topoisomerase GyrA/ParC subunit family.</text>
</comment>
<sequence length="833" mass="93873">MAEQDQSRVKEINISQEMKTSFMDYAMSVIVSRALPDVRDGMKPVHRRILYAMNELGMTSDKAYKKSARIVGEVIGKYHPHGDSAVYETMVRMAQDFSYRYMLVDGHGNFGSIDGDAAAAMRYTEARMSKISMELVRDINKDTIDYQDNYDGSEKEPVVMPSRFPNLLVNGASGIAVGMATNIPPHQLGEVIDGVLALSKNPDISVPELMEHIPGPDFPTGAEILGRSGIRKAYQTGRGSITLRAKTEIEEHHGKQRIIVHEIPYQVNKAKLIEKIAELVRDKKIDGITDLRDESDRNGMRIVIEVRKDANANVLLNNLYKQTALQTSFGINLLALVEGQPKVLNLKECLEHYLAHQVIVIRRRTAFELRKAEARAHILEGLRIALDHLDEVISLIRSSQTTEIARNGLMERFELSYEQAQAILDMRLQRLTGLERDKIEAEYKELIERIAELKAILADHEKVLDIIREELLELKEKYNDERKTAISASEDMFEDEDLIPRQNVVITLTHHGYIKRLPISTYRSQKRGGRGIQGMGTNEDDFVQHLFTTNSHHTILFFTNKGKVYRLKGYEIPELGRTAKGIPIINLLQIEQDEYISTIIPIEEFTEDHYLFFMTKDGIAKRTQLSSFANIRRGGLFAINLREGDELHGVRLTNGDKEVIVGTRQGMAIRFHETDVRLMGRTATGVKGISLTGDDHVVGMDIVEDGQDVLIVTEKGFGKRTPIADYRIQTRGGKGIKTCNITEKNGPLVSLKVVSVDHDLMIITASGIIIRLHVKDISVTGRITQGVTLIRVAEGEEVATVARVDIEDDELDEDESIEEERDDRSEVEQGENE</sequence>
<accession>O50628</accession>
<accession>Q9JPZ0</accession>
<feature type="chain" id="PRO_0000145220" description="DNA gyrase subunit A">
    <location>
        <begin position="1"/>
        <end position="833"/>
    </location>
</feature>
<feature type="domain" description="Topo IIA-type catalytic" evidence="2">
    <location>
        <begin position="35"/>
        <end position="498"/>
    </location>
</feature>
<feature type="region of interest" description="Disordered" evidence="3">
    <location>
        <begin position="803"/>
        <end position="833"/>
    </location>
</feature>
<feature type="short sequence motif" description="GyrA-box" evidence="1">
    <location>
        <begin position="525"/>
        <end position="531"/>
    </location>
</feature>
<feature type="compositionally biased region" description="Acidic residues" evidence="3">
    <location>
        <begin position="806"/>
        <end position="821"/>
    </location>
</feature>
<feature type="active site" description="O-(5'-phospho-DNA)-tyrosine intermediate" evidence="1">
    <location>
        <position position="123"/>
    </location>
</feature>
<organism>
    <name type="scientific">Halalkalibacterium halodurans (strain ATCC BAA-125 / DSM 18197 / FERM 7344 / JCM 9153 / C-125)</name>
    <name type="common">Bacillus halodurans</name>
    <dbReference type="NCBI Taxonomy" id="272558"/>
    <lineage>
        <taxon>Bacteria</taxon>
        <taxon>Bacillati</taxon>
        <taxon>Bacillota</taxon>
        <taxon>Bacilli</taxon>
        <taxon>Bacillales</taxon>
        <taxon>Bacillaceae</taxon>
        <taxon>Halalkalibacterium (ex Joshi et al. 2022)</taxon>
    </lineage>
</organism>
<name>GYRA_HALH5</name>
<protein>
    <recommendedName>
        <fullName evidence="1">DNA gyrase subunit A</fullName>
        <ecNumber evidence="1">5.6.2.2</ecNumber>
    </recommendedName>
</protein>
<dbReference type="EC" id="5.6.2.2" evidence="1"/>
<dbReference type="EMBL" id="AB010081">
    <property type="protein sequence ID" value="BAA24188.1"/>
    <property type="molecule type" value="Genomic_DNA"/>
</dbReference>
<dbReference type="EMBL" id="AB013492">
    <property type="protein sequence ID" value="BAA82691.1"/>
    <property type="molecule type" value="Genomic_DNA"/>
</dbReference>
<dbReference type="EMBL" id="BA000004">
    <property type="protein sequence ID" value="BAB03726.1"/>
    <property type="molecule type" value="Genomic_DNA"/>
</dbReference>
<dbReference type="PIR" id="G83650">
    <property type="entry name" value="G83650"/>
</dbReference>
<dbReference type="PIR" id="T46552">
    <property type="entry name" value="T46552"/>
</dbReference>
<dbReference type="RefSeq" id="WP_010896191.1">
    <property type="nucleotide sequence ID" value="NC_002570.2"/>
</dbReference>
<dbReference type="SMR" id="O50628"/>
<dbReference type="STRING" id="272558.gene:10725822"/>
<dbReference type="KEGG" id="bha:BH0007"/>
<dbReference type="eggNOG" id="COG0188">
    <property type="taxonomic scope" value="Bacteria"/>
</dbReference>
<dbReference type="HOGENOM" id="CLU_002977_6_1_9"/>
<dbReference type="OrthoDB" id="9806486at2"/>
<dbReference type="Proteomes" id="UP000001258">
    <property type="component" value="Chromosome"/>
</dbReference>
<dbReference type="GO" id="GO:0005694">
    <property type="term" value="C:chromosome"/>
    <property type="evidence" value="ECO:0007669"/>
    <property type="project" value="InterPro"/>
</dbReference>
<dbReference type="GO" id="GO:0005737">
    <property type="term" value="C:cytoplasm"/>
    <property type="evidence" value="ECO:0007669"/>
    <property type="project" value="UniProtKB-SubCell"/>
</dbReference>
<dbReference type="GO" id="GO:0009330">
    <property type="term" value="C:DNA topoisomerase type II (double strand cut, ATP-hydrolyzing) complex"/>
    <property type="evidence" value="ECO:0007669"/>
    <property type="project" value="TreeGrafter"/>
</dbReference>
<dbReference type="GO" id="GO:0005524">
    <property type="term" value="F:ATP binding"/>
    <property type="evidence" value="ECO:0007669"/>
    <property type="project" value="UniProtKB-UniRule"/>
</dbReference>
<dbReference type="GO" id="GO:0003677">
    <property type="term" value="F:DNA binding"/>
    <property type="evidence" value="ECO:0007669"/>
    <property type="project" value="UniProtKB-UniRule"/>
</dbReference>
<dbReference type="GO" id="GO:0034335">
    <property type="term" value="F:DNA negative supercoiling activity"/>
    <property type="evidence" value="ECO:0007669"/>
    <property type="project" value="UniProtKB-ARBA"/>
</dbReference>
<dbReference type="GO" id="GO:0006265">
    <property type="term" value="P:DNA topological change"/>
    <property type="evidence" value="ECO:0007669"/>
    <property type="project" value="UniProtKB-UniRule"/>
</dbReference>
<dbReference type="GO" id="GO:0006261">
    <property type="term" value="P:DNA-templated DNA replication"/>
    <property type="evidence" value="ECO:0007669"/>
    <property type="project" value="UniProtKB-UniRule"/>
</dbReference>
<dbReference type="CDD" id="cd00187">
    <property type="entry name" value="TOP4c"/>
    <property type="match status" value="1"/>
</dbReference>
<dbReference type="FunFam" id="1.10.268.10:FF:000001">
    <property type="entry name" value="DNA gyrase subunit A"/>
    <property type="match status" value="1"/>
</dbReference>
<dbReference type="FunFam" id="2.120.10.90:FF:000004">
    <property type="entry name" value="DNA gyrase subunit A"/>
    <property type="match status" value="1"/>
</dbReference>
<dbReference type="FunFam" id="3.30.1360.40:FF:000002">
    <property type="entry name" value="DNA gyrase subunit A"/>
    <property type="match status" value="1"/>
</dbReference>
<dbReference type="FunFam" id="3.90.199.10:FF:000001">
    <property type="entry name" value="DNA gyrase subunit A"/>
    <property type="match status" value="1"/>
</dbReference>
<dbReference type="Gene3D" id="3.30.1360.40">
    <property type="match status" value="1"/>
</dbReference>
<dbReference type="Gene3D" id="2.120.10.90">
    <property type="entry name" value="DNA gyrase/topoisomerase IV, subunit A, C-terminal"/>
    <property type="match status" value="1"/>
</dbReference>
<dbReference type="Gene3D" id="3.90.199.10">
    <property type="entry name" value="Topoisomerase II, domain 5"/>
    <property type="match status" value="1"/>
</dbReference>
<dbReference type="Gene3D" id="1.10.268.10">
    <property type="entry name" value="Topoisomerase, domain 3"/>
    <property type="match status" value="1"/>
</dbReference>
<dbReference type="HAMAP" id="MF_01897">
    <property type="entry name" value="GyrA"/>
    <property type="match status" value="1"/>
</dbReference>
<dbReference type="InterPro" id="IPR005743">
    <property type="entry name" value="GyrA"/>
</dbReference>
<dbReference type="InterPro" id="IPR006691">
    <property type="entry name" value="GyrA/parC_rep"/>
</dbReference>
<dbReference type="InterPro" id="IPR035516">
    <property type="entry name" value="Gyrase/topoIV_suA_C"/>
</dbReference>
<dbReference type="InterPro" id="IPR013760">
    <property type="entry name" value="Topo_IIA-like_dom_sf"/>
</dbReference>
<dbReference type="InterPro" id="IPR013758">
    <property type="entry name" value="Topo_IIA_A/C_ab"/>
</dbReference>
<dbReference type="InterPro" id="IPR013757">
    <property type="entry name" value="Topo_IIA_A_a_sf"/>
</dbReference>
<dbReference type="InterPro" id="IPR002205">
    <property type="entry name" value="Topo_IIA_dom_A"/>
</dbReference>
<dbReference type="InterPro" id="IPR050220">
    <property type="entry name" value="Type_II_DNA_Topoisomerases"/>
</dbReference>
<dbReference type="NCBIfam" id="TIGR01063">
    <property type="entry name" value="gyrA"/>
    <property type="match status" value="1"/>
</dbReference>
<dbReference type="NCBIfam" id="NF004043">
    <property type="entry name" value="PRK05560.1"/>
    <property type="match status" value="1"/>
</dbReference>
<dbReference type="NCBIfam" id="NF004044">
    <property type="entry name" value="PRK05561.1"/>
    <property type="match status" value="1"/>
</dbReference>
<dbReference type="PANTHER" id="PTHR43493:SF5">
    <property type="entry name" value="DNA GYRASE SUBUNIT A, CHLOROPLASTIC_MITOCHONDRIAL"/>
    <property type="match status" value="1"/>
</dbReference>
<dbReference type="PANTHER" id="PTHR43493">
    <property type="entry name" value="DNA GYRASE/TOPOISOMERASE SUBUNIT A"/>
    <property type="match status" value="1"/>
</dbReference>
<dbReference type="Pfam" id="PF03989">
    <property type="entry name" value="DNA_gyraseA_C"/>
    <property type="match status" value="6"/>
</dbReference>
<dbReference type="Pfam" id="PF00521">
    <property type="entry name" value="DNA_topoisoIV"/>
    <property type="match status" value="1"/>
</dbReference>
<dbReference type="SMART" id="SM00434">
    <property type="entry name" value="TOP4c"/>
    <property type="match status" value="1"/>
</dbReference>
<dbReference type="SUPFAM" id="SSF101904">
    <property type="entry name" value="GyrA/ParC C-terminal domain-like"/>
    <property type="match status" value="1"/>
</dbReference>
<dbReference type="SUPFAM" id="SSF56719">
    <property type="entry name" value="Type II DNA topoisomerase"/>
    <property type="match status" value="1"/>
</dbReference>
<dbReference type="PROSITE" id="PS52040">
    <property type="entry name" value="TOPO_IIA"/>
    <property type="match status" value="1"/>
</dbReference>
<gene>
    <name evidence="1" type="primary">gyrA</name>
    <name type="ordered locus">BH0007</name>
</gene>
<reference key="1">
    <citation type="submission" date="1997-12" db="EMBL/GenBank/DDBJ databases">
        <title>Cloning and expression of the genes encoding DNA gyrase from alkaliphilic Bacillus sp. strain C-125.</title>
        <authorList>
            <person name="Masui N."/>
            <person name="Nakasone K."/>
            <person name="Horikoshi K."/>
        </authorList>
    </citation>
    <scope>NUCLEOTIDE SEQUENCE [GENOMIC DNA]</scope>
    <source>
        <strain>ATCC BAA-125 / DSM 18197 / FERM 7344 / JCM 9153 / C-125</strain>
    </source>
</reference>
<reference key="2">
    <citation type="journal article" date="1999" name="Biosci. Biotechnol. Biochem.">
        <title>Replication origin region of the chromosome of alkaliphilic Bacillus halodurans C-125.</title>
        <authorList>
            <person name="Takami H."/>
            <person name="Masui N."/>
            <person name="Nakasone K."/>
            <person name="Horikoshi K."/>
        </authorList>
    </citation>
    <scope>NUCLEOTIDE SEQUENCE [GENOMIC DNA]</scope>
    <source>
        <strain>ATCC BAA-125 / DSM 18197 / FERM 7344 / JCM 9153 / C-125</strain>
    </source>
</reference>
<reference key="3">
    <citation type="journal article" date="2000" name="Nucleic Acids Res.">
        <title>Complete genome sequence of the alkaliphilic bacterium Bacillus halodurans and genomic sequence comparison with Bacillus subtilis.</title>
        <authorList>
            <person name="Takami H."/>
            <person name="Nakasone K."/>
            <person name="Takaki Y."/>
            <person name="Maeno G."/>
            <person name="Sasaki R."/>
            <person name="Masui N."/>
            <person name="Fuji F."/>
            <person name="Hirama C."/>
            <person name="Nakamura Y."/>
            <person name="Ogasawara N."/>
            <person name="Kuhara S."/>
            <person name="Horikoshi K."/>
        </authorList>
    </citation>
    <scope>NUCLEOTIDE SEQUENCE [LARGE SCALE GENOMIC DNA]</scope>
    <source>
        <strain>ATCC BAA-125 / DSM 18197 / FERM 7344 / JCM 9153 / C-125</strain>
    </source>
</reference>
<proteinExistence type="inferred from homology"/>
<keyword id="KW-0067">ATP-binding</keyword>
<keyword id="KW-0963">Cytoplasm</keyword>
<keyword id="KW-0238">DNA-binding</keyword>
<keyword id="KW-0413">Isomerase</keyword>
<keyword id="KW-0547">Nucleotide-binding</keyword>
<keyword id="KW-1185">Reference proteome</keyword>
<keyword id="KW-0799">Topoisomerase</keyword>